<evidence type="ECO:0000255" key="1">
    <source>
        <dbReference type="HAMAP-Rule" id="MF_00258"/>
    </source>
</evidence>
<name>MURI_BRUA2</name>
<keyword id="KW-0133">Cell shape</keyword>
<keyword id="KW-0961">Cell wall biogenesis/degradation</keyword>
<keyword id="KW-0413">Isomerase</keyword>
<keyword id="KW-0573">Peptidoglycan synthesis</keyword>
<keyword id="KW-1185">Reference proteome</keyword>
<proteinExistence type="inferred from homology"/>
<gene>
    <name evidence="1" type="primary">murI</name>
    <name type="ordered locus">BAB1_1217</name>
</gene>
<protein>
    <recommendedName>
        <fullName evidence="1">Glutamate racemase</fullName>
        <ecNumber evidence="1">5.1.1.3</ecNumber>
    </recommendedName>
</protein>
<comment type="function">
    <text evidence="1">Provides the (R)-glutamate required for cell wall biosynthesis.</text>
</comment>
<comment type="catalytic activity">
    <reaction evidence="1">
        <text>L-glutamate = D-glutamate</text>
        <dbReference type="Rhea" id="RHEA:12813"/>
        <dbReference type="ChEBI" id="CHEBI:29985"/>
        <dbReference type="ChEBI" id="CHEBI:29986"/>
        <dbReference type="EC" id="5.1.1.3"/>
    </reaction>
</comment>
<comment type="pathway">
    <text evidence="1">Cell wall biogenesis; peptidoglycan biosynthesis.</text>
</comment>
<comment type="similarity">
    <text evidence="1">Belongs to the aspartate/glutamate racemases family.</text>
</comment>
<organism>
    <name type="scientific">Brucella abortus (strain 2308)</name>
    <dbReference type="NCBI Taxonomy" id="359391"/>
    <lineage>
        <taxon>Bacteria</taxon>
        <taxon>Pseudomonadati</taxon>
        <taxon>Pseudomonadota</taxon>
        <taxon>Alphaproteobacteria</taxon>
        <taxon>Hyphomicrobiales</taxon>
        <taxon>Brucellaceae</taxon>
        <taxon>Brucella/Ochrobactrum group</taxon>
        <taxon>Brucella</taxon>
    </lineage>
</organism>
<sequence>MKKAPAGSFPAKPTIAPERPILVFDSGIGGLTVLREARVVMPDRRFVYIADDAGFPYGNWEEEALKRRIIELFGEFIANYDPEIAVIACNTASTLVLEDLRRAYPSVPFVGTVPAIKPAAERTSSGLVSVLATPGTVKRAYTRDLIQSFASRCHVRLVGADGLAAIAEAHIRGESFDEALVMAQIAPCFIEKDGKRTDIVVLACTHYPFLVNVLRRLAPWPVDWLDPAEAIARRMKSLLPARSDDDEFHSQDDLAFFTSRKPDYAIRRLMQGFGLRF</sequence>
<reference key="1">
    <citation type="journal article" date="2005" name="Infect. Immun.">
        <title>Whole-genome analyses of speciation events in pathogenic Brucellae.</title>
        <authorList>
            <person name="Chain P.S."/>
            <person name="Comerci D.J."/>
            <person name="Tolmasky M.E."/>
            <person name="Larimer F.W."/>
            <person name="Malfatti S.A."/>
            <person name="Vergez L.M."/>
            <person name="Aguero F."/>
            <person name="Land M.L."/>
            <person name="Ugalde R.A."/>
            <person name="Garcia E."/>
        </authorList>
    </citation>
    <scope>NUCLEOTIDE SEQUENCE [LARGE SCALE GENOMIC DNA]</scope>
    <source>
        <strain>2308</strain>
    </source>
</reference>
<accession>Q2YRV4</accession>
<feature type="chain" id="PRO_1000047549" description="Glutamate racemase">
    <location>
        <begin position="1"/>
        <end position="277"/>
    </location>
</feature>
<feature type="active site" description="Proton donor/acceptor" evidence="1">
    <location>
        <position position="89"/>
    </location>
</feature>
<feature type="active site" description="Proton donor/acceptor" evidence="1">
    <location>
        <position position="204"/>
    </location>
</feature>
<feature type="binding site" evidence="1">
    <location>
        <begin position="25"/>
        <end position="26"/>
    </location>
    <ligand>
        <name>substrate</name>
    </ligand>
</feature>
<feature type="binding site" evidence="1">
    <location>
        <begin position="57"/>
        <end position="58"/>
    </location>
    <ligand>
        <name>substrate</name>
    </ligand>
</feature>
<feature type="binding site" evidence="1">
    <location>
        <begin position="90"/>
        <end position="91"/>
    </location>
    <ligand>
        <name>substrate</name>
    </ligand>
</feature>
<feature type="binding site" evidence="1">
    <location>
        <begin position="205"/>
        <end position="206"/>
    </location>
    <ligand>
        <name>substrate</name>
    </ligand>
</feature>
<dbReference type="EC" id="5.1.1.3" evidence="1"/>
<dbReference type="EMBL" id="AM040264">
    <property type="protein sequence ID" value="CAJ11173.1"/>
    <property type="molecule type" value="Genomic_DNA"/>
</dbReference>
<dbReference type="RefSeq" id="WP_002964323.1">
    <property type="nucleotide sequence ID" value="NZ_KN046823.1"/>
</dbReference>
<dbReference type="SMR" id="Q2YRV4"/>
<dbReference type="STRING" id="359391.BAB1_1217"/>
<dbReference type="GeneID" id="97533561"/>
<dbReference type="KEGG" id="bmf:BAB1_1217"/>
<dbReference type="PATRIC" id="fig|359391.11.peg.114"/>
<dbReference type="HOGENOM" id="CLU_052344_2_0_5"/>
<dbReference type="PhylomeDB" id="Q2YRV4"/>
<dbReference type="UniPathway" id="UPA00219"/>
<dbReference type="Proteomes" id="UP000002719">
    <property type="component" value="Chromosome I"/>
</dbReference>
<dbReference type="GO" id="GO:0008881">
    <property type="term" value="F:glutamate racemase activity"/>
    <property type="evidence" value="ECO:0007669"/>
    <property type="project" value="UniProtKB-UniRule"/>
</dbReference>
<dbReference type="GO" id="GO:0071555">
    <property type="term" value="P:cell wall organization"/>
    <property type="evidence" value="ECO:0007669"/>
    <property type="project" value="UniProtKB-KW"/>
</dbReference>
<dbReference type="GO" id="GO:0009252">
    <property type="term" value="P:peptidoglycan biosynthetic process"/>
    <property type="evidence" value="ECO:0007669"/>
    <property type="project" value="UniProtKB-UniRule"/>
</dbReference>
<dbReference type="GO" id="GO:0008360">
    <property type="term" value="P:regulation of cell shape"/>
    <property type="evidence" value="ECO:0007669"/>
    <property type="project" value="UniProtKB-KW"/>
</dbReference>
<dbReference type="Gene3D" id="3.40.50.1860">
    <property type="match status" value="2"/>
</dbReference>
<dbReference type="HAMAP" id="MF_00258">
    <property type="entry name" value="Glu_racemase"/>
    <property type="match status" value="1"/>
</dbReference>
<dbReference type="InterPro" id="IPR015942">
    <property type="entry name" value="Asp/Glu/hydantoin_racemase"/>
</dbReference>
<dbReference type="InterPro" id="IPR001920">
    <property type="entry name" value="Asp/Glu_race"/>
</dbReference>
<dbReference type="InterPro" id="IPR018187">
    <property type="entry name" value="Asp/Glu_racemase_AS_1"/>
</dbReference>
<dbReference type="InterPro" id="IPR033134">
    <property type="entry name" value="Asp/Glu_racemase_AS_2"/>
</dbReference>
<dbReference type="InterPro" id="IPR004391">
    <property type="entry name" value="Glu_race"/>
</dbReference>
<dbReference type="NCBIfam" id="TIGR00067">
    <property type="entry name" value="glut_race"/>
    <property type="match status" value="1"/>
</dbReference>
<dbReference type="PANTHER" id="PTHR21198">
    <property type="entry name" value="GLUTAMATE RACEMASE"/>
    <property type="match status" value="1"/>
</dbReference>
<dbReference type="PANTHER" id="PTHR21198:SF2">
    <property type="entry name" value="GLUTAMATE RACEMASE"/>
    <property type="match status" value="1"/>
</dbReference>
<dbReference type="Pfam" id="PF01177">
    <property type="entry name" value="Asp_Glu_race"/>
    <property type="match status" value="1"/>
</dbReference>
<dbReference type="SUPFAM" id="SSF53681">
    <property type="entry name" value="Aspartate/glutamate racemase"/>
    <property type="match status" value="2"/>
</dbReference>
<dbReference type="PROSITE" id="PS00923">
    <property type="entry name" value="ASP_GLU_RACEMASE_1"/>
    <property type="match status" value="1"/>
</dbReference>
<dbReference type="PROSITE" id="PS00924">
    <property type="entry name" value="ASP_GLU_RACEMASE_2"/>
    <property type="match status" value="1"/>
</dbReference>